<reference key="1">
    <citation type="journal article" date="1997" name="Nature">
        <title>The nucleotide sequence of Saccharomyces cerevisiae chromosome IV.</title>
        <authorList>
            <person name="Jacq C."/>
            <person name="Alt-Moerbe J."/>
            <person name="Andre B."/>
            <person name="Arnold W."/>
            <person name="Bahr A."/>
            <person name="Ballesta J.P.G."/>
            <person name="Bargues M."/>
            <person name="Baron L."/>
            <person name="Becker A."/>
            <person name="Biteau N."/>
            <person name="Bloecker H."/>
            <person name="Blugeon C."/>
            <person name="Boskovic J."/>
            <person name="Brandt P."/>
            <person name="Brueckner M."/>
            <person name="Buitrago M.J."/>
            <person name="Coster F."/>
            <person name="Delaveau T."/>
            <person name="del Rey F."/>
            <person name="Dujon B."/>
            <person name="Eide L.G."/>
            <person name="Garcia-Cantalejo J.M."/>
            <person name="Goffeau A."/>
            <person name="Gomez-Peris A."/>
            <person name="Granotier C."/>
            <person name="Hanemann V."/>
            <person name="Hankeln T."/>
            <person name="Hoheisel J.D."/>
            <person name="Jaeger W."/>
            <person name="Jimenez A."/>
            <person name="Jonniaux J.-L."/>
            <person name="Kraemer C."/>
            <person name="Kuester H."/>
            <person name="Laamanen P."/>
            <person name="Legros Y."/>
            <person name="Louis E.J."/>
            <person name="Moeller-Rieker S."/>
            <person name="Monnet A."/>
            <person name="Moro M."/>
            <person name="Mueller-Auer S."/>
            <person name="Nussbaumer B."/>
            <person name="Paricio N."/>
            <person name="Paulin L."/>
            <person name="Perea J."/>
            <person name="Perez-Alonso M."/>
            <person name="Perez-Ortin J.E."/>
            <person name="Pohl T.M."/>
            <person name="Prydz H."/>
            <person name="Purnelle B."/>
            <person name="Rasmussen S.W."/>
            <person name="Remacha M.A."/>
            <person name="Revuelta J.L."/>
            <person name="Rieger M."/>
            <person name="Salom D."/>
            <person name="Saluz H.P."/>
            <person name="Saiz J.E."/>
            <person name="Saren A.-M."/>
            <person name="Schaefer M."/>
            <person name="Scharfe M."/>
            <person name="Schmidt E.R."/>
            <person name="Schneider C."/>
            <person name="Scholler P."/>
            <person name="Schwarz S."/>
            <person name="Soler-Mira A."/>
            <person name="Urrestarazu L.A."/>
            <person name="Verhasselt P."/>
            <person name="Vissers S."/>
            <person name="Voet M."/>
            <person name="Volckaert G."/>
            <person name="Wagner G."/>
            <person name="Wambutt R."/>
            <person name="Wedler E."/>
            <person name="Wedler H."/>
            <person name="Woelfl S."/>
            <person name="Harris D.E."/>
            <person name="Bowman S."/>
            <person name="Brown D."/>
            <person name="Churcher C.M."/>
            <person name="Connor R."/>
            <person name="Dedman K."/>
            <person name="Gentles S."/>
            <person name="Hamlin N."/>
            <person name="Hunt S."/>
            <person name="Jones L."/>
            <person name="McDonald S."/>
            <person name="Murphy L.D."/>
            <person name="Niblett D."/>
            <person name="Odell C."/>
            <person name="Oliver K."/>
            <person name="Rajandream M.A."/>
            <person name="Richards C."/>
            <person name="Shore L."/>
            <person name="Walsh S.V."/>
            <person name="Barrell B.G."/>
            <person name="Dietrich F.S."/>
            <person name="Mulligan J.T."/>
            <person name="Allen E."/>
            <person name="Araujo R."/>
            <person name="Aviles E."/>
            <person name="Berno A."/>
            <person name="Carpenter J."/>
            <person name="Chen E."/>
            <person name="Cherry J.M."/>
            <person name="Chung E."/>
            <person name="Duncan M."/>
            <person name="Hunicke-Smith S."/>
            <person name="Hyman R.W."/>
            <person name="Komp C."/>
            <person name="Lashkari D."/>
            <person name="Lew H."/>
            <person name="Lin D."/>
            <person name="Mosedale D."/>
            <person name="Nakahara K."/>
            <person name="Namath A."/>
            <person name="Oefner P."/>
            <person name="Oh C."/>
            <person name="Petel F.X."/>
            <person name="Roberts D."/>
            <person name="Schramm S."/>
            <person name="Schroeder M."/>
            <person name="Shogren T."/>
            <person name="Shroff N."/>
            <person name="Winant A."/>
            <person name="Yelton M.A."/>
            <person name="Botstein D."/>
            <person name="Davis R.W."/>
            <person name="Johnston M."/>
            <person name="Andrews S."/>
            <person name="Brinkman R."/>
            <person name="Cooper J."/>
            <person name="Ding H."/>
            <person name="Du Z."/>
            <person name="Favello A."/>
            <person name="Fulton L."/>
            <person name="Gattung S."/>
            <person name="Greco T."/>
            <person name="Hallsworth K."/>
            <person name="Hawkins J."/>
            <person name="Hillier L.W."/>
            <person name="Jier M."/>
            <person name="Johnson D."/>
            <person name="Johnston L."/>
            <person name="Kirsten J."/>
            <person name="Kucaba T."/>
            <person name="Langston Y."/>
            <person name="Latreille P."/>
            <person name="Le T."/>
            <person name="Mardis E."/>
            <person name="Menezes S."/>
            <person name="Miller N."/>
            <person name="Nhan M."/>
            <person name="Pauley A."/>
            <person name="Peluso D."/>
            <person name="Rifkin L."/>
            <person name="Riles L."/>
            <person name="Taich A."/>
            <person name="Trevaskis E."/>
            <person name="Vignati D."/>
            <person name="Wilcox L."/>
            <person name="Wohldman P."/>
            <person name="Vaudin M."/>
            <person name="Wilson R."/>
            <person name="Waterston R."/>
            <person name="Albermann K."/>
            <person name="Hani J."/>
            <person name="Heumann K."/>
            <person name="Kleine K."/>
            <person name="Mewes H.-W."/>
            <person name="Zollner A."/>
            <person name="Zaccaria P."/>
        </authorList>
    </citation>
    <scope>NUCLEOTIDE SEQUENCE [LARGE SCALE GENOMIC DNA]</scope>
    <source>
        <strain>ATCC 204508 / S288c</strain>
    </source>
</reference>
<reference key="2">
    <citation type="journal article" date="2014" name="G3 (Bethesda)">
        <title>The reference genome sequence of Saccharomyces cerevisiae: Then and now.</title>
        <authorList>
            <person name="Engel S.R."/>
            <person name="Dietrich F.S."/>
            <person name="Fisk D.G."/>
            <person name="Binkley G."/>
            <person name="Balakrishnan R."/>
            <person name="Costanzo M.C."/>
            <person name="Dwight S.S."/>
            <person name="Hitz B.C."/>
            <person name="Karra K."/>
            <person name="Nash R.S."/>
            <person name="Weng S."/>
            <person name="Wong E.D."/>
            <person name="Lloyd P."/>
            <person name="Skrzypek M.S."/>
            <person name="Miyasato S.R."/>
            <person name="Simison M."/>
            <person name="Cherry J.M."/>
        </authorList>
    </citation>
    <scope>GENOME REANNOTATION</scope>
    <source>
        <strain>ATCC 204508 / S288c</strain>
    </source>
</reference>
<reference key="3">
    <citation type="journal article" date="2012" name="Am. J. Hum. Genet.">
        <title>Infantile encephaloneuromyopathy and defective mitochondrial translation are due to a homozygous RMND1 mutation.</title>
        <authorList>
            <person name="Garcia-Diaz B."/>
            <person name="Barros M.H."/>
            <person name="Sanna-Cherchi S."/>
            <person name="Emmanuele V."/>
            <person name="Akman H.O."/>
            <person name="Ferreiro-Barros C.C."/>
            <person name="Horvath R."/>
            <person name="Tadesse S."/>
            <person name="El Gharaby N."/>
            <person name="DiMauro S."/>
            <person name="De Vivo D.C."/>
            <person name="Shokr A."/>
            <person name="Hirano M."/>
            <person name="Quinzii C.M."/>
        </authorList>
    </citation>
    <scope>SUBCELLULAR LOCATION</scope>
    <scope>TOPOLOGY</scope>
</reference>
<reference key="4">
    <citation type="journal article" date="2015" name="Cell Rep.">
        <title>Organization of mitochondrial gene expression in two distinct ribosome-containing assemblies.</title>
        <authorList>
            <person name="Kehrein K."/>
            <person name="Schilling R."/>
            <person name="Moller-Hergt B.V."/>
            <person name="Wurm C.A."/>
            <person name="Jakobs S."/>
            <person name="Lamkemeyer T."/>
            <person name="Langer T."/>
            <person name="Ott M."/>
        </authorList>
    </citation>
    <scope>FUNCTION</scope>
    <scope>SUBUNIT</scope>
</reference>
<protein>
    <recommendedName>
        <fullName evidence="7">MIOREX complex component 10</fullName>
    </recommendedName>
    <alternativeName>
        <fullName evidence="4">Mitochondrial organization of gene expression protein 10</fullName>
    </alternativeName>
</protein>
<sequence>MLSFRSLTSTFGFVSRFQIRRLGTSLSIQNLEVQDGRWKGKLATEKKTNREHKSVDTNIKTMKMLKNPKNSTRYLRRSFVPNHRKQENGRDILEDSLSKDHLKVKSCITITTGEGYDLKRCMKLLTMQGLQPTNLIPDEIVSFSYQDNGNKGDVMILGQNGSIVSWGFSESSVRNCIVPIVKAASLNPLNGEDFETEDMDYVEIEGEQDFDKLSSLDNKVTPRIACESFLSGDLIIINSLDSDQGMLDKAAFSSGLSRSTNLAVLEEAMEKHISKTRTITENISKGTKLNLRSSDALKSIGRLFLIRGKLNLYSELIETPDLYWSEPQLEEIFKNVSRYLDIGPRINILNSKLDYSTDECRALISLLNERNSTFLEWIIIYLIAFELCFEIYHFYQKYSSYCSEPTNDDLDATK</sequence>
<accession>Q05648</accession>
<accession>D6VSR2</accession>
<dbReference type="EMBL" id="U51030">
    <property type="protein sequence ID" value="AAB64460.1"/>
    <property type="molecule type" value="Genomic_DNA"/>
</dbReference>
<dbReference type="EMBL" id="BK006938">
    <property type="protein sequence ID" value="DAA12122.1"/>
    <property type="molecule type" value="Genomic_DNA"/>
</dbReference>
<dbReference type="PIR" id="S70138">
    <property type="entry name" value="S70138"/>
</dbReference>
<dbReference type="RefSeq" id="NP_010568.3">
    <property type="nucleotide sequence ID" value="NM_001180590.3"/>
</dbReference>
<dbReference type="BioGRID" id="32335">
    <property type="interactions" value="55"/>
</dbReference>
<dbReference type="FunCoup" id="Q05648">
    <property type="interactions" value="105"/>
</dbReference>
<dbReference type="STRING" id="4932.YDR282C"/>
<dbReference type="PaxDb" id="4932-YDR282C"/>
<dbReference type="PeptideAtlas" id="Q05648"/>
<dbReference type="EnsemblFungi" id="YDR282C_mRNA">
    <property type="protein sequence ID" value="YDR282C"/>
    <property type="gene ID" value="YDR282C"/>
</dbReference>
<dbReference type="GeneID" id="851876"/>
<dbReference type="KEGG" id="sce:YDR282C"/>
<dbReference type="AGR" id="SGD:S000002690"/>
<dbReference type="SGD" id="S000002690">
    <property type="gene designation" value="MRX10"/>
</dbReference>
<dbReference type="VEuPathDB" id="FungiDB:YDR282C"/>
<dbReference type="eggNOG" id="KOG2861">
    <property type="taxonomic scope" value="Eukaryota"/>
</dbReference>
<dbReference type="GeneTree" id="ENSGT00390000013337"/>
<dbReference type="HOGENOM" id="CLU_011220_0_0_1"/>
<dbReference type="InParanoid" id="Q05648"/>
<dbReference type="OMA" id="QGLYQTK"/>
<dbReference type="OrthoDB" id="242766at2759"/>
<dbReference type="BioCyc" id="YEAST:G3O-29847-MONOMER"/>
<dbReference type="BioGRID-ORCS" id="851876">
    <property type="hits" value="0 hits in 10 CRISPR screens"/>
</dbReference>
<dbReference type="PRO" id="PR:Q05648"/>
<dbReference type="Proteomes" id="UP000002311">
    <property type="component" value="Chromosome IV"/>
</dbReference>
<dbReference type="RNAct" id="Q05648">
    <property type="molecule type" value="protein"/>
</dbReference>
<dbReference type="GO" id="GO:0005743">
    <property type="term" value="C:mitochondrial inner membrane"/>
    <property type="evidence" value="ECO:0000314"/>
    <property type="project" value="SGD"/>
</dbReference>
<dbReference type="GO" id="GO:0070131">
    <property type="term" value="P:positive regulation of mitochondrial translation"/>
    <property type="evidence" value="ECO:0000318"/>
    <property type="project" value="GO_Central"/>
</dbReference>
<dbReference type="InterPro" id="IPR003734">
    <property type="entry name" value="DUF155"/>
</dbReference>
<dbReference type="InterPro" id="IPR051624">
    <property type="entry name" value="RMD1/Sad1-interacting"/>
</dbReference>
<dbReference type="PANTHER" id="PTHR16255">
    <property type="entry name" value="REQUIRED FOR MEIOTIC NUCLEAR DIVISION PROTEIN 1 HOMOLOG"/>
    <property type="match status" value="1"/>
</dbReference>
<dbReference type="PANTHER" id="PTHR16255:SF1">
    <property type="entry name" value="REQUIRED FOR MEIOTIC NUCLEAR DIVISION PROTEIN 1 HOMOLOG"/>
    <property type="match status" value="1"/>
</dbReference>
<dbReference type="Pfam" id="PF02582">
    <property type="entry name" value="DUF155"/>
    <property type="match status" value="1"/>
</dbReference>
<keyword id="KW-0472">Membrane</keyword>
<keyword id="KW-0496">Mitochondrion</keyword>
<keyword id="KW-0999">Mitochondrion inner membrane</keyword>
<keyword id="KW-1185">Reference proteome</keyword>
<keyword id="KW-0809">Transit peptide</keyword>
<keyword id="KW-0812">Transmembrane</keyword>
<keyword id="KW-1133">Transmembrane helix</keyword>
<gene>
    <name evidence="4" type="primary">MRX10</name>
    <name evidence="8" type="ordered locus">YDR282C</name>
</gene>
<proteinExistence type="evidence at protein level"/>
<name>MRX10_YEAST</name>
<feature type="transit peptide" description="Mitochondrion" evidence="1">
    <location>
        <begin position="1"/>
        <end position="29"/>
    </location>
</feature>
<feature type="chain" id="PRO_0000229731" description="MIOREX complex component 10">
    <location>
        <begin position="30"/>
        <end position="414"/>
    </location>
</feature>
<feature type="topological domain" description="Mitochondrial matrix" evidence="6">
    <location>
        <begin position="30"/>
        <end position="373"/>
    </location>
</feature>
<feature type="transmembrane region" description="Helical" evidence="1">
    <location>
        <begin position="374"/>
        <end position="394"/>
    </location>
</feature>
<feature type="topological domain" description="Mitochondrial intermembrane" evidence="2">
    <location>
        <begin position="395"/>
        <end position="414"/>
    </location>
</feature>
<comment type="function">
    <text evidence="3">Component of MIOREX complexes, large expressome-like assemblies of ribosomes with factors involved in all the steps of post-transcriptional gene expression.</text>
</comment>
<comment type="subunit">
    <text evidence="3">Associates with the mitochondrial ribosome.</text>
</comment>
<comment type="subcellular location">
    <subcellularLocation>
        <location evidence="2">Mitochondrion inner membrane</location>
        <topology evidence="1">Single-pass membrane protein</topology>
    </subcellularLocation>
</comment>
<comment type="similarity">
    <text evidence="5">Belongs to the RMD1/sif2 family.</text>
</comment>
<evidence type="ECO:0000255" key="1"/>
<evidence type="ECO:0000269" key="2">
    <source>
    </source>
</evidence>
<evidence type="ECO:0000269" key="3">
    <source>
    </source>
</evidence>
<evidence type="ECO:0000303" key="4">
    <source>
    </source>
</evidence>
<evidence type="ECO:0000305" key="5"/>
<evidence type="ECO:0000305" key="6">
    <source>
    </source>
</evidence>
<evidence type="ECO:0000305" key="7">
    <source>
    </source>
</evidence>
<evidence type="ECO:0000312" key="8">
    <source>
        <dbReference type="SGD" id="S000002690"/>
    </source>
</evidence>
<organism>
    <name type="scientific">Saccharomyces cerevisiae (strain ATCC 204508 / S288c)</name>
    <name type="common">Baker's yeast</name>
    <dbReference type="NCBI Taxonomy" id="559292"/>
    <lineage>
        <taxon>Eukaryota</taxon>
        <taxon>Fungi</taxon>
        <taxon>Dikarya</taxon>
        <taxon>Ascomycota</taxon>
        <taxon>Saccharomycotina</taxon>
        <taxon>Saccharomycetes</taxon>
        <taxon>Saccharomycetales</taxon>
        <taxon>Saccharomycetaceae</taxon>
        <taxon>Saccharomyces</taxon>
    </lineage>
</organism>